<proteinExistence type="inferred from homology"/>
<comment type="function">
    <text evidence="1">Molecular chaperone. Has ATPase activity.</text>
</comment>
<comment type="subunit">
    <text evidence="1">Homodimer.</text>
</comment>
<comment type="subcellular location">
    <subcellularLocation>
        <location evidence="1">Cytoplasm</location>
    </subcellularLocation>
</comment>
<comment type="similarity">
    <text evidence="1">Belongs to the heat shock protein 90 family.</text>
</comment>
<reference key="1">
    <citation type="journal article" date="1998" name="Science">
        <title>Complete genome sequence of Treponema pallidum, the syphilis spirochete.</title>
        <authorList>
            <person name="Fraser C.M."/>
            <person name="Norris S.J."/>
            <person name="Weinstock G.M."/>
            <person name="White O."/>
            <person name="Sutton G.G."/>
            <person name="Dodson R.J."/>
            <person name="Gwinn M.L."/>
            <person name="Hickey E.K."/>
            <person name="Clayton R.A."/>
            <person name="Ketchum K.A."/>
            <person name="Sodergren E."/>
            <person name="Hardham J.M."/>
            <person name="McLeod M.P."/>
            <person name="Salzberg S.L."/>
            <person name="Peterson J.D."/>
            <person name="Khalak H.G."/>
            <person name="Richardson D.L."/>
            <person name="Howell J.K."/>
            <person name="Chidambaram M."/>
            <person name="Utterback T.R."/>
            <person name="McDonald L.A."/>
            <person name="Artiach P."/>
            <person name="Bowman C."/>
            <person name="Cotton M.D."/>
            <person name="Fujii C."/>
            <person name="Garland S.A."/>
            <person name="Hatch B."/>
            <person name="Horst K."/>
            <person name="Roberts K.M."/>
            <person name="Sandusky M."/>
            <person name="Weidman J.F."/>
            <person name="Smith H.O."/>
            <person name="Venter J.C."/>
        </authorList>
    </citation>
    <scope>NUCLEOTIDE SEQUENCE [LARGE SCALE GENOMIC DNA]</scope>
    <source>
        <strain>Nichols</strain>
    </source>
</reference>
<organism>
    <name type="scientific">Treponema pallidum (strain Nichols)</name>
    <dbReference type="NCBI Taxonomy" id="243276"/>
    <lineage>
        <taxon>Bacteria</taxon>
        <taxon>Pseudomonadati</taxon>
        <taxon>Spirochaetota</taxon>
        <taxon>Spirochaetia</taxon>
        <taxon>Spirochaetales</taxon>
        <taxon>Treponemataceae</taxon>
        <taxon>Treponema</taxon>
    </lineage>
</organism>
<accession>O83949</accession>
<keyword id="KW-0067">ATP-binding</keyword>
<keyword id="KW-0143">Chaperone</keyword>
<keyword id="KW-0963">Cytoplasm</keyword>
<keyword id="KW-0547">Nucleotide-binding</keyword>
<keyword id="KW-1185">Reference proteome</keyword>
<keyword id="KW-0346">Stress response</keyword>
<dbReference type="EMBL" id="AE000520">
    <property type="protein sequence ID" value="AAC65938.1"/>
    <property type="molecule type" value="Genomic_DNA"/>
</dbReference>
<dbReference type="PIR" id="F71258">
    <property type="entry name" value="F71258"/>
</dbReference>
<dbReference type="RefSeq" id="WP_010882428.1">
    <property type="nucleotide sequence ID" value="NC_021490.2"/>
</dbReference>
<dbReference type="SMR" id="O83949"/>
<dbReference type="IntAct" id="O83949">
    <property type="interactions" value="10"/>
</dbReference>
<dbReference type="STRING" id="243276.TP_0984"/>
<dbReference type="EnsemblBacteria" id="AAC65938">
    <property type="protein sequence ID" value="AAC65938"/>
    <property type="gene ID" value="TP_0984"/>
</dbReference>
<dbReference type="GeneID" id="93876729"/>
<dbReference type="KEGG" id="tpa:TP_0984"/>
<dbReference type="KEGG" id="tpw:TPANIC_0984"/>
<dbReference type="eggNOG" id="COG0326">
    <property type="taxonomic scope" value="Bacteria"/>
</dbReference>
<dbReference type="HOGENOM" id="CLU_006684_3_0_12"/>
<dbReference type="OrthoDB" id="9802640at2"/>
<dbReference type="Proteomes" id="UP000000811">
    <property type="component" value="Chromosome"/>
</dbReference>
<dbReference type="GO" id="GO:0005737">
    <property type="term" value="C:cytoplasm"/>
    <property type="evidence" value="ECO:0007669"/>
    <property type="project" value="UniProtKB-SubCell"/>
</dbReference>
<dbReference type="GO" id="GO:0005524">
    <property type="term" value="F:ATP binding"/>
    <property type="evidence" value="ECO:0007669"/>
    <property type="project" value="UniProtKB-UniRule"/>
</dbReference>
<dbReference type="GO" id="GO:0016887">
    <property type="term" value="F:ATP hydrolysis activity"/>
    <property type="evidence" value="ECO:0007669"/>
    <property type="project" value="InterPro"/>
</dbReference>
<dbReference type="GO" id="GO:0140662">
    <property type="term" value="F:ATP-dependent protein folding chaperone"/>
    <property type="evidence" value="ECO:0007669"/>
    <property type="project" value="InterPro"/>
</dbReference>
<dbReference type="GO" id="GO:0051082">
    <property type="term" value="F:unfolded protein binding"/>
    <property type="evidence" value="ECO:0007669"/>
    <property type="project" value="UniProtKB-UniRule"/>
</dbReference>
<dbReference type="CDD" id="cd16927">
    <property type="entry name" value="HATPase_Hsp90-like"/>
    <property type="match status" value="1"/>
</dbReference>
<dbReference type="FunFam" id="3.30.565.10:FF:000009">
    <property type="entry name" value="Molecular chaperone HtpG"/>
    <property type="match status" value="1"/>
</dbReference>
<dbReference type="Gene3D" id="3.30.230.80">
    <property type="match status" value="1"/>
</dbReference>
<dbReference type="Gene3D" id="3.40.50.11260">
    <property type="match status" value="1"/>
</dbReference>
<dbReference type="Gene3D" id="1.20.120.790">
    <property type="entry name" value="Heat shock protein 90, C-terminal domain"/>
    <property type="match status" value="1"/>
</dbReference>
<dbReference type="Gene3D" id="3.30.565.10">
    <property type="entry name" value="Histidine kinase-like ATPase, C-terminal domain"/>
    <property type="match status" value="1"/>
</dbReference>
<dbReference type="HAMAP" id="MF_00505">
    <property type="entry name" value="HSP90"/>
    <property type="match status" value="1"/>
</dbReference>
<dbReference type="InterPro" id="IPR036890">
    <property type="entry name" value="HATPase_C_sf"/>
</dbReference>
<dbReference type="InterPro" id="IPR019805">
    <property type="entry name" value="Heat_shock_protein_90_CS"/>
</dbReference>
<dbReference type="InterPro" id="IPR037196">
    <property type="entry name" value="HSP90_C"/>
</dbReference>
<dbReference type="InterPro" id="IPR001404">
    <property type="entry name" value="Hsp90_fam"/>
</dbReference>
<dbReference type="InterPro" id="IPR020575">
    <property type="entry name" value="Hsp90_N"/>
</dbReference>
<dbReference type="InterPro" id="IPR020568">
    <property type="entry name" value="Ribosomal_Su5_D2-typ_SF"/>
</dbReference>
<dbReference type="NCBIfam" id="NF003555">
    <property type="entry name" value="PRK05218.1"/>
    <property type="match status" value="1"/>
</dbReference>
<dbReference type="PANTHER" id="PTHR11528">
    <property type="entry name" value="HEAT SHOCK PROTEIN 90 FAMILY MEMBER"/>
    <property type="match status" value="1"/>
</dbReference>
<dbReference type="Pfam" id="PF13589">
    <property type="entry name" value="HATPase_c_3"/>
    <property type="match status" value="1"/>
</dbReference>
<dbReference type="Pfam" id="PF00183">
    <property type="entry name" value="HSP90"/>
    <property type="match status" value="1"/>
</dbReference>
<dbReference type="PIRSF" id="PIRSF002583">
    <property type="entry name" value="Hsp90"/>
    <property type="match status" value="1"/>
</dbReference>
<dbReference type="PRINTS" id="PR00775">
    <property type="entry name" value="HEATSHOCK90"/>
</dbReference>
<dbReference type="SMART" id="SM00387">
    <property type="entry name" value="HATPase_c"/>
    <property type="match status" value="1"/>
</dbReference>
<dbReference type="SUPFAM" id="SSF55874">
    <property type="entry name" value="ATPase domain of HSP90 chaperone/DNA topoisomerase II/histidine kinase"/>
    <property type="match status" value="1"/>
</dbReference>
<dbReference type="SUPFAM" id="SSF110942">
    <property type="entry name" value="HSP90 C-terminal domain"/>
    <property type="match status" value="1"/>
</dbReference>
<dbReference type="SUPFAM" id="SSF54211">
    <property type="entry name" value="Ribosomal protein S5 domain 2-like"/>
    <property type="match status" value="1"/>
</dbReference>
<dbReference type="PROSITE" id="PS00298">
    <property type="entry name" value="HSP90"/>
    <property type="match status" value="1"/>
</dbReference>
<gene>
    <name evidence="1" type="primary">htpG</name>
    <name type="ordered locus">TP_0984</name>
</gene>
<sequence length="639" mass="72938">MAQYEFQTEVSQLLTLIIHSLYSHKEIFLRELISNASDALDKLKYEALVDGTYKQLHCEARIDIAFEEDAQRLVVRDTGIGMNAEDLRANLGTIARSGTKAFLSTLTRDQKQDSNLIGQFGVGFYSAFMVASKVEVITKKAAENTVWKWTSEGQNAYTLDEVDAAAFPVLEGVAEGSAGTCVVLHLSQENSEFATRWRLEEVIKKYSDHIAFPIYLHYLQKEYDKDGAVTDTQKKVDQVNDAGALWKRPKSELKEEDYHRFYQTLTRDSTPPLLYVHTKAEGTQEYVTLFYVPAKAPFDLFHADYKPGVKLFVKRVFITDDEKELLPVYLRFVRGVIDSEDLPLNVSREILQQNRVLAAIKSASVKKLLGEFKRLAECDGKKYDEFITQYNRPLKEGLYSDYEHREQLLELVRFRTLSESVPEDGWTSFAEYVSRMKPDQKAIYYIAGNDDRVLRQSPHAESYRLQGFEVLVMSDDIDGIVMPSVSKYKEWELRAINRLGSEEELRPNEETDAAAQREQGFKPLLERLTHILSDSVKEVRLSKRLSDSVSCIVIDENDPTVQMERLMRATGQTHKSKIKPILEINASHTLVQKLKESTDEAFVEDLAFVLLDQALLIEGMDVGSSVDFVKRVNRLLARG</sequence>
<feature type="chain" id="PRO_0000063018" description="Chaperone protein HtpG">
    <location>
        <begin position="1"/>
        <end position="639"/>
    </location>
</feature>
<feature type="region of interest" description="A; substrate-binding" evidence="1">
    <location>
        <begin position="1"/>
        <end position="348"/>
    </location>
</feature>
<feature type="region of interest" description="B" evidence="1">
    <location>
        <begin position="349"/>
        <end position="565"/>
    </location>
</feature>
<feature type="region of interest" description="C" evidence="1">
    <location>
        <begin position="566"/>
        <end position="639"/>
    </location>
</feature>
<protein>
    <recommendedName>
        <fullName evidence="1">Chaperone protein HtpG</fullName>
    </recommendedName>
    <alternativeName>
        <fullName evidence="1">Heat shock protein HtpG</fullName>
    </alternativeName>
    <alternativeName>
        <fullName evidence="1">High temperature protein G</fullName>
    </alternativeName>
</protein>
<evidence type="ECO:0000255" key="1">
    <source>
        <dbReference type="HAMAP-Rule" id="MF_00505"/>
    </source>
</evidence>
<name>HTPG_TREPA</name>